<keyword id="KW-0963">Cytoplasm</keyword>
<keyword id="KW-0444">Lipid biosynthesis</keyword>
<keyword id="KW-0443">Lipid metabolism</keyword>
<keyword id="KW-0594">Phospholipid biosynthesis</keyword>
<keyword id="KW-1208">Phospholipid metabolism</keyword>
<keyword id="KW-1185">Reference proteome</keyword>
<keyword id="KW-0808">Transferase</keyword>
<dbReference type="EC" id="2.3.1.274" evidence="1"/>
<dbReference type="EMBL" id="AP008934">
    <property type="protein sequence ID" value="BAE18685.1"/>
    <property type="molecule type" value="Genomic_DNA"/>
</dbReference>
<dbReference type="RefSeq" id="WP_011303286.1">
    <property type="nucleotide sequence ID" value="NC_007350.1"/>
</dbReference>
<dbReference type="SMR" id="Q49X13"/>
<dbReference type="GeneID" id="3615186"/>
<dbReference type="KEGG" id="ssp:SSP1540"/>
<dbReference type="PATRIC" id="fig|342451.11.peg.1542"/>
<dbReference type="eggNOG" id="COG0416">
    <property type="taxonomic scope" value="Bacteria"/>
</dbReference>
<dbReference type="HOGENOM" id="CLU_039379_1_1_9"/>
<dbReference type="OrthoDB" id="9806408at2"/>
<dbReference type="UniPathway" id="UPA00085"/>
<dbReference type="Proteomes" id="UP000006371">
    <property type="component" value="Chromosome"/>
</dbReference>
<dbReference type="GO" id="GO:0005737">
    <property type="term" value="C:cytoplasm"/>
    <property type="evidence" value="ECO:0007669"/>
    <property type="project" value="UniProtKB-SubCell"/>
</dbReference>
<dbReference type="GO" id="GO:0043811">
    <property type="term" value="F:phosphate:acyl-[acyl carrier protein] acyltransferase activity"/>
    <property type="evidence" value="ECO:0007669"/>
    <property type="project" value="UniProtKB-UniRule"/>
</dbReference>
<dbReference type="GO" id="GO:0006633">
    <property type="term" value="P:fatty acid biosynthetic process"/>
    <property type="evidence" value="ECO:0007669"/>
    <property type="project" value="UniProtKB-UniRule"/>
</dbReference>
<dbReference type="GO" id="GO:0008654">
    <property type="term" value="P:phospholipid biosynthetic process"/>
    <property type="evidence" value="ECO:0007669"/>
    <property type="project" value="UniProtKB-KW"/>
</dbReference>
<dbReference type="Gene3D" id="3.40.718.10">
    <property type="entry name" value="Isopropylmalate Dehydrogenase"/>
    <property type="match status" value="1"/>
</dbReference>
<dbReference type="HAMAP" id="MF_00019">
    <property type="entry name" value="PlsX"/>
    <property type="match status" value="1"/>
</dbReference>
<dbReference type="InterPro" id="IPR003664">
    <property type="entry name" value="FA_synthesis"/>
</dbReference>
<dbReference type="InterPro" id="IPR012281">
    <property type="entry name" value="Phospholipid_synth_PlsX-like"/>
</dbReference>
<dbReference type="NCBIfam" id="TIGR00182">
    <property type="entry name" value="plsX"/>
    <property type="match status" value="1"/>
</dbReference>
<dbReference type="PANTHER" id="PTHR30100">
    <property type="entry name" value="FATTY ACID/PHOSPHOLIPID SYNTHESIS PROTEIN PLSX"/>
    <property type="match status" value="1"/>
</dbReference>
<dbReference type="PANTHER" id="PTHR30100:SF1">
    <property type="entry name" value="PHOSPHATE ACYLTRANSFERASE"/>
    <property type="match status" value="1"/>
</dbReference>
<dbReference type="Pfam" id="PF02504">
    <property type="entry name" value="FA_synthesis"/>
    <property type="match status" value="1"/>
</dbReference>
<dbReference type="PIRSF" id="PIRSF002465">
    <property type="entry name" value="Phsphlp_syn_PlsX"/>
    <property type="match status" value="1"/>
</dbReference>
<dbReference type="SUPFAM" id="SSF53659">
    <property type="entry name" value="Isocitrate/Isopropylmalate dehydrogenase-like"/>
    <property type="match status" value="1"/>
</dbReference>
<sequence length="328" mass="35130">MVKLAIDMMGGDDAPGIVLEAVEKAVNDFKDLEIILFGDSSQCTLEHDRVEVRHCTESITMDDEPVRAIKRKKDSSMARMAEAVKSGEADGCVSAGNTGALMSAGLFIVGRIKGVERPALVVTLPTVSGKGFVFMDVGANADAKAEHLLQYAQLGNIYAQKIRGIAEPSVCLLNIGTEAAKGNSLTKKAYRLMEDQHDFNFTGNVEAKGLMNDVADVVVTDGYTGNMILKNLEGVAKAMGKMFKSTLLSSFKNKMAALILRKDLNGLMTKMDYAEYGGSVLLGLNGTVVKAHGSSSAKAFYSAIRQAKIAGEQEIVKTMKETVGTENE</sequence>
<accession>Q49X13</accession>
<organism>
    <name type="scientific">Staphylococcus saprophyticus subsp. saprophyticus (strain ATCC 15305 / DSM 20229 / NCIMB 8711 / NCTC 7292 / S-41)</name>
    <dbReference type="NCBI Taxonomy" id="342451"/>
    <lineage>
        <taxon>Bacteria</taxon>
        <taxon>Bacillati</taxon>
        <taxon>Bacillota</taxon>
        <taxon>Bacilli</taxon>
        <taxon>Bacillales</taxon>
        <taxon>Staphylococcaceae</taxon>
        <taxon>Staphylococcus</taxon>
    </lineage>
</organism>
<feature type="chain" id="PRO_1000001841" description="Phosphate acyltransferase">
    <location>
        <begin position="1"/>
        <end position="328"/>
    </location>
</feature>
<protein>
    <recommendedName>
        <fullName evidence="1">Phosphate acyltransferase</fullName>
        <ecNumber evidence="1">2.3.1.274</ecNumber>
    </recommendedName>
    <alternativeName>
        <fullName evidence="1">Acyl-ACP phosphotransacylase</fullName>
    </alternativeName>
    <alternativeName>
        <fullName evidence="1">Acyl-[acyl-carrier-protein]--phosphate acyltransferase</fullName>
    </alternativeName>
    <alternativeName>
        <fullName evidence="1">Phosphate-acyl-ACP acyltransferase</fullName>
    </alternativeName>
</protein>
<gene>
    <name evidence="1" type="primary">plsX</name>
    <name type="ordered locus">SSP1540</name>
</gene>
<name>PLSX_STAS1</name>
<proteinExistence type="inferred from homology"/>
<reference key="1">
    <citation type="journal article" date="2005" name="Proc. Natl. Acad. Sci. U.S.A.">
        <title>Whole genome sequence of Staphylococcus saprophyticus reveals the pathogenesis of uncomplicated urinary tract infection.</title>
        <authorList>
            <person name="Kuroda M."/>
            <person name="Yamashita A."/>
            <person name="Hirakawa H."/>
            <person name="Kumano M."/>
            <person name="Morikawa K."/>
            <person name="Higashide M."/>
            <person name="Maruyama A."/>
            <person name="Inose Y."/>
            <person name="Matoba K."/>
            <person name="Toh H."/>
            <person name="Kuhara S."/>
            <person name="Hattori M."/>
            <person name="Ohta T."/>
        </authorList>
    </citation>
    <scope>NUCLEOTIDE SEQUENCE [LARGE SCALE GENOMIC DNA]</scope>
    <source>
        <strain>ATCC 15305 / DSM 20229 / NCIMB 8711 / NCTC 7292 / S-41</strain>
    </source>
</reference>
<evidence type="ECO:0000255" key="1">
    <source>
        <dbReference type="HAMAP-Rule" id="MF_00019"/>
    </source>
</evidence>
<comment type="function">
    <text evidence="1">Catalyzes the reversible formation of acyl-phosphate (acyl-PO(4)) from acyl-[acyl-carrier-protein] (acyl-ACP). This enzyme utilizes acyl-ACP as fatty acyl donor, but not acyl-CoA.</text>
</comment>
<comment type="catalytic activity">
    <reaction evidence="1">
        <text>a fatty acyl-[ACP] + phosphate = an acyl phosphate + holo-[ACP]</text>
        <dbReference type="Rhea" id="RHEA:42292"/>
        <dbReference type="Rhea" id="RHEA-COMP:9685"/>
        <dbReference type="Rhea" id="RHEA-COMP:14125"/>
        <dbReference type="ChEBI" id="CHEBI:43474"/>
        <dbReference type="ChEBI" id="CHEBI:59918"/>
        <dbReference type="ChEBI" id="CHEBI:64479"/>
        <dbReference type="ChEBI" id="CHEBI:138651"/>
        <dbReference type="EC" id="2.3.1.274"/>
    </reaction>
</comment>
<comment type="pathway">
    <text evidence="1">Lipid metabolism; phospholipid metabolism.</text>
</comment>
<comment type="subunit">
    <text evidence="1">Homodimer. Probably interacts with PlsY.</text>
</comment>
<comment type="subcellular location">
    <subcellularLocation>
        <location evidence="1">Cytoplasm</location>
    </subcellularLocation>
    <text evidence="1">Associated with the membrane possibly through PlsY.</text>
</comment>
<comment type="similarity">
    <text evidence="1">Belongs to the PlsX family.</text>
</comment>